<organism>
    <name type="scientific">Homo sapiens</name>
    <name type="common">Human</name>
    <dbReference type="NCBI Taxonomy" id="9606"/>
    <lineage>
        <taxon>Eukaryota</taxon>
        <taxon>Metazoa</taxon>
        <taxon>Chordata</taxon>
        <taxon>Craniata</taxon>
        <taxon>Vertebrata</taxon>
        <taxon>Euteleostomi</taxon>
        <taxon>Mammalia</taxon>
        <taxon>Eutheria</taxon>
        <taxon>Euarchontoglires</taxon>
        <taxon>Primates</taxon>
        <taxon>Haplorrhini</taxon>
        <taxon>Catarrhini</taxon>
        <taxon>Hominidae</taxon>
        <taxon>Homo</taxon>
    </lineage>
</organism>
<feature type="signal peptide" evidence="13 15">
    <location>
        <begin position="1"/>
        <end position="23"/>
    </location>
</feature>
<feature type="chain" id="PRO_0000021406" description="Hemopexin" evidence="13">
    <location>
        <begin position="24"/>
        <end position="462"/>
    </location>
</feature>
<feature type="repeat" description="Hemopexin 1">
    <location>
        <begin position="53"/>
        <end position="93"/>
    </location>
</feature>
<feature type="repeat" description="Hemopexin 2">
    <location>
        <begin position="94"/>
        <end position="139"/>
    </location>
</feature>
<feature type="repeat" description="Hemopexin 3">
    <location>
        <begin position="140"/>
        <end position="184"/>
    </location>
</feature>
<feature type="repeat" description="Hemopexin 4">
    <location>
        <begin position="185"/>
        <end position="231"/>
    </location>
</feature>
<feature type="repeat" description="Hemopexin 5">
    <location>
        <begin position="259"/>
        <end position="304"/>
    </location>
</feature>
<feature type="repeat" description="Hemopexin 6">
    <location>
        <begin position="305"/>
        <end position="352"/>
    </location>
</feature>
<feature type="repeat" description="Hemopexin 7">
    <location>
        <begin position="357"/>
        <end position="396"/>
    </location>
</feature>
<feature type="repeat" description="Hemopexin 8">
    <location>
        <begin position="400"/>
        <end position="450"/>
    </location>
</feature>
<feature type="region of interest" description="Disordered" evidence="2">
    <location>
        <begin position="29"/>
        <end position="48"/>
    </location>
</feature>
<feature type="region of interest" description="O-glycosylated at one site">
    <location>
        <begin position="30"/>
        <end position="40"/>
    </location>
</feature>
<feature type="compositionally biased region" description="Basic and acidic residues" evidence="2">
    <location>
        <begin position="38"/>
        <end position="48"/>
    </location>
</feature>
<feature type="binding site" description="axial binding residue" evidence="1">
    <location>
        <position position="79"/>
    </location>
    <ligand>
        <name>heme</name>
        <dbReference type="ChEBI" id="CHEBI:30413"/>
        <label>1</label>
    </ligand>
    <ligandPart>
        <name>Fe</name>
        <dbReference type="ChEBI" id="CHEBI:18248"/>
    </ligandPart>
</feature>
<feature type="binding site" description="axial binding residue" evidence="1">
    <location>
        <position position="150"/>
    </location>
    <ligand>
        <name>heme</name>
        <dbReference type="ChEBI" id="CHEBI:30413"/>
        <label>1</label>
    </ligand>
    <ligandPart>
        <name>Fe</name>
        <dbReference type="ChEBI" id="CHEBI:18248"/>
    </ligandPart>
</feature>
<feature type="binding site" description="axial binding residue" evidence="1">
    <location>
        <position position="236"/>
    </location>
    <ligand>
        <name>heme</name>
        <dbReference type="ChEBI" id="CHEBI:30413"/>
        <label>2</label>
    </ligand>
    <ligandPart>
        <name>Fe</name>
        <dbReference type="ChEBI" id="CHEBI:18248"/>
    </ligandPart>
</feature>
<feature type="binding site" description="axial binding residue" evidence="1">
    <location>
        <position position="293"/>
    </location>
    <ligand>
        <name>heme</name>
        <dbReference type="ChEBI" id="CHEBI:30413"/>
        <label>2</label>
    </ligand>
    <ligandPart>
        <name>Fe</name>
        <dbReference type="ChEBI" id="CHEBI:18248"/>
    </ligandPart>
</feature>
<feature type="glycosylation site" description="O-linked (GalNAc...) threonine" evidence="10 14 15">
    <location>
        <position position="24"/>
    </location>
</feature>
<feature type="glycosylation site" description="O-linked (GalNAc...) threonine" evidence="12">
    <location>
        <position position="29"/>
    </location>
</feature>
<feature type="glycosylation site" description="N-linked (GlcNAc...) (complex) asparagine" evidence="5 10 14">
    <location>
        <position position="64"/>
    </location>
</feature>
<feature type="glycosylation site" description="N-linked (GlcNAc...) (complex) asparagine" evidence="3 4 5 6 8 9 10 14">
    <location>
        <position position="187"/>
    </location>
</feature>
<feature type="glycosylation site" description="N-linked (GlcNAc...) asparagine" evidence="3 14 15">
    <location>
        <position position="240"/>
    </location>
</feature>
<feature type="glycosylation site" description="N-linked (GlcNAc...) asparagine" evidence="3 14 15">
    <location>
        <position position="246"/>
    </location>
</feature>
<feature type="glycosylation site" description="N-linked (GlcNAc...) (complex) asparagine" evidence="4 6 8 9 10 14">
    <location>
        <position position="453"/>
    </location>
</feature>
<feature type="disulfide bond" evidence="13">
    <location>
        <begin position="50"/>
        <end position="231"/>
    </location>
</feature>
<feature type="disulfide bond" evidence="13">
    <location>
        <begin position="149"/>
        <end position="154"/>
    </location>
</feature>
<feature type="disulfide bond" evidence="13">
    <location>
        <begin position="188"/>
        <end position="200"/>
    </location>
</feature>
<feature type="disulfide bond" evidence="13">
    <location>
        <begin position="257"/>
        <end position="460"/>
    </location>
</feature>
<feature type="disulfide bond" evidence="13">
    <location>
        <begin position="366"/>
        <end position="408"/>
    </location>
</feature>
<feature type="disulfide bond" evidence="13">
    <location>
        <begin position="418"/>
        <end position="435"/>
    </location>
</feature>
<feature type="sequence variant" id="VAR_047137" description="In dbSNP:rs10839564.">
    <original>D</original>
    <variation>N</variation>
    <location>
        <position position="52"/>
    </location>
</feature>
<feature type="sequence variant" id="VAR_033990" description="In dbSNP:rs12117.">
    <original>R</original>
    <variation>W</variation>
    <location>
        <position position="83"/>
    </location>
</feature>
<feature type="sequence conflict" description="In Ref. 2; BAG36404." evidence="16" ref="2">
    <original>K</original>
    <variation>R</variation>
    <location>
        <position position="411"/>
    </location>
</feature>
<accession>P02790</accession>
<accession>B2R957</accession>
<protein>
    <recommendedName>
        <fullName>Hemopexin</fullName>
    </recommendedName>
    <alternativeName>
        <fullName>Beta-1B-glycoprotein</fullName>
    </alternativeName>
</protein>
<gene>
    <name type="primary">HPX</name>
</gene>
<evidence type="ECO:0000250" key="1"/>
<evidence type="ECO:0000256" key="2">
    <source>
        <dbReference type="SAM" id="MobiDB-lite"/>
    </source>
</evidence>
<evidence type="ECO:0000269" key="3">
    <source>
    </source>
</evidence>
<evidence type="ECO:0000269" key="4">
    <source>
    </source>
</evidence>
<evidence type="ECO:0000269" key="5">
    <source>
    </source>
</evidence>
<evidence type="ECO:0000269" key="6">
    <source>
    </source>
</evidence>
<evidence type="ECO:0000269" key="7">
    <source>
    </source>
</evidence>
<evidence type="ECO:0000269" key="8">
    <source>
    </source>
</evidence>
<evidence type="ECO:0000269" key="9">
    <source>
    </source>
</evidence>
<evidence type="ECO:0000269" key="10">
    <source>
    </source>
</evidence>
<evidence type="ECO:0000269" key="11">
    <source>
    </source>
</evidence>
<evidence type="ECO:0000269" key="12">
    <source>
    </source>
</evidence>
<evidence type="ECO:0000269" key="13">
    <source>
    </source>
</evidence>
<evidence type="ECO:0000269" key="14">
    <source>
    </source>
</evidence>
<evidence type="ECO:0000269" key="15">
    <source>
    </source>
</evidence>
<evidence type="ECO:0000305" key="16"/>
<keyword id="KW-0903">Direct protein sequencing</keyword>
<keyword id="KW-1015">Disulfide bond</keyword>
<keyword id="KW-0325">Glycoprotein</keyword>
<keyword id="KW-0349">Heme</keyword>
<keyword id="KW-0945">Host-virus interaction</keyword>
<keyword id="KW-0408">Iron</keyword>
<keyword id="KW-0479">Metal-binding</keyword>
<keyword id="KW-1267">Proteomics identification</keyword>
<keyword id="KW-1185">Reference proteome</keyword>
<keyword id="KW-0677">Repeat</keyword>
<keyword id="KW-0964">Secreted</keyword>
<keyword id="KW-0732">Signal</keyword>
<keyword id="KW-0813">Transport</keyword>
<proteinExistence type="evidence at protein level"/>
<sequence>MARVLGAPVALGLWSLCWSLAIATPLPPTSAHGNVAEGETKPDPDVTERCSDGWSFDATTLDDNGTMLFFKGEFVWKSHKWDRELISERWKNFPSPVDAAFRQGHNSVFLIKGDKVWVYPPEKKEKGYPKLLQDEFPGIPSPLDAAVECHRGECQAEGVLFFQGDREWFWDLATGTMKERSWPAVGNCSSALRWLGRYYCFQGNQFLRFDPVRGEVPPRYPRDVRDYFMPCPGRGHGHRNGTGHGNSTHHGPEYMRCSPHLVLSALTSDNHGATYAFSGTHYWRLDTSRDGWHSWPIAHQWPQGPSAVDAAFSWEEKLYLVQGTQVYVFLTKGGYTLVSGYPKRLEKEVGTPHGIILDSVDAAFICPGSSRLHIMAGRRLWWLDLKSGAQATWTELPWPHEKVDGALCMEKSLGPNSCSANGPGLYLIHGPNLYCYSDVEKLNAAKALPQPQNVTSLLGCTH</sequence>
<name>HEMO_HUMAN</name>
<reference key="1">
    <citation type="journal article" date="1988" name="J. Mol. Evol.">
        <title>Structure of the human hemopexin gene and evidence for intron-mediated evolution.</title>
        <authorList>
            <person name="Altruda F."/>
            <person name="Poli V."/>
            <person name="Restagno G."/>
            <person name="Silengo L."/>
        </authorList>
    </citation>
    <scope>NUCLEOTIDE SEQUENCE [GENOMIC DNA]</scope>
</reference>
<reference key="2">
    <citation type="journal article" date="2004" name="Nat. Genet.">
        <title>Complete sequencing and characterization of 21,243 full-length human cDNAs.</title>
        <authorList>
            <person name="Ota T."/>
            <person name="Suzuki Y."/>
            <person name="Nishikawa T."/>
            <person name="Otsuki T."/>
            <person name="Sugiyama T."/>
            <person name="Irie R."/>
            <person name="Wakamatsu A."/>
            <person name="Hayashi K."/>
            <person name="Sato H."/>
            <person name="Nagai K."/>
            <person name="Kimura K."/>
            <person name="Makita H."/>
            <person name="Sekine M."/>
            <person name="Obayashi M."/>
            <person name="Nishi T."/>
            <person name="Shibahara T."/>
            <person name="Tanaka T."/>
            <person name="Ishii S."/>
            <person name="Yamamoto J."/>
            <person name="Saito K."/>
            <person name="Kawai Y."/>
            <person name="Isono Y."/>
            <person name="Nakamura Y."/>
            <person name="Nagahari K."/>
            <person name="Murakami K."/>
            <person name="Yasuda T."/>
            <person name="Iwayanagi T."/>
            <person name="Wagatsuma M."/>
            <person name="Shiratori A."/>
            <person name="Sudo H."/>
            <person name="Hosoiri T."/>
            <person name="Kaku Y."/>
            <person name="Kodaira H."/>
            <person name="Kondo H."/>
            <person name="Sugawara M."/>
            <person name="Takahashi M."/>
            <person name="Kanda K."/>
            <person name="Yokoi T."/>
            <person name="Furuya T."/>
            <person name="Kikkawa E."/>
            <person name="Omura Y."/>
            <person name="Abe K."/>
            <person name="Kamihara K."/>
            <person name="Katsuta N."/>
            <person name="Sato K."/>
            <person name="Tanikawa M."/>
            <person name="Yamazaki M."/>
            <person name="Ninomiya K."/>
            <person name="Ishibashi T."/>
            <person name="Yamashita H."/>
            <person name="Murakawa K."/>
            <person name="Fujimori K."/>
            <person name="Tanai H."/>
            <person name="Kimata M."/>
            <person name="Watanabe M."/>
            <person name="Hiraoka S."/>
            <person name="Chiba Y."/>
            <person name="Ishida S."/>
            <person name="Ono Y."/>
            <person name="Takiguchi S."/>
            <person name="Watanabe S."/>
            <person name="Yosida M."/>
            <person name="Hotuta T."/>
            <person name="Kusano J."/>
            <person name="Kanehori K."/>
            <person name="Takahashi-Fujii A."/>
            <person name="Hara H."/>
            <person name="Tanase T.-O."/>
            <person name="Nomura Y."/>
            <person name="Togiya S."/>
            <person name="Komai F."/>
            <person name="Hara R."/>
            <person name="Takeuchi K."/>
            <person name="Arita M."/>
            <person name="Imose N."/>
            <person name="Musashino K."/>
            <person name="Yuuki H."/>
            <person name="Oshima A."/>
            <person name="Sasaki N."/>
            <person name="Aotsuka S."/>
            <person name="Yoshikawa Y."/>
            <person name="Matsunawa H."/>
            <person name="Ichihara T."/>
            <person name="Shiohata N."/>
            <person name="Sano S."/>
            <person name="Moriya S."/>
            <person name="Momiyama H."/>
            <person name="Satoh N."/>
            <person name="Takami S."/>
            <person name="Terashima Y."/>
            <person name="Suzuki O."/>
            <person name="Nakagawa S."/>
            <person name="Senoh A."/>
            <person name="Mizoguchi H."/>
            <person name="Goto Y."/>
            <person name="Shimizu F."/>
            <person name="Wakebe H."/>
            <person name="Hishigaki H."/>
            <person name="Watanabe T."/>
            <person name="Sugiyama A."/>
            <person name="Takemoto M."/>
            <person name="Kawakami B."/>
            <person name="Yamazaki M."/>
            <person name="Watanabe K."/>
            <person name="Kumagai A."/>
            <person name="Itakura S."/>
            <person name="Fukuzumi Y."/>
            <person name="Fujimori Y."/>
            <person name="Komiyama M."/>
            <person name="Tashiro H."/>
            <person name="Tanigami A."/>
            <person name="Fujiwara T."/>
            <person name="Ono T."/>
            <person name="Yamada K."/>
            <person name="Fujii Y."/>
            <person name="Ozaki K."/>
            <person name="Hirao M."/>
            <person name="Ohmori Y."/>
            <person name="Kawabata A."/>
            <person name="Hikiji T."/>
            <person name="Kobatake N."/>
            <person name="Inagaki H."/>
            <person name="Ikema Y."/>
            <person name="Okamoto S."/>
            <person name="Okitani R."/>
            <person name="Kawakami T."/>
            <person name="Noguchi S."/>
            <person name="Itoh T."/>
            <person name="Shigeta K."/>
            <person name="Senba T."/>
            <person name="Matsumura K."/>
            <person name="Nakajima Y."/>
            <person name="Mizuno T."/>
            <person name="Morinaga M."/>
            <person name="Sasaki M."/>
            <person name="Togashi T."/>
            <person name="Oyama M."/>
            <person name="Hata H."/>
            <person name="Watanabe M."/>
            <person name="Komatsu T."/>
            <person name="Mizushima-Sugano J."/>
            <person name="Satoh T."/>
            <person name="Shirai Y."/>
            <person name="Takahashi Y."/>
            <person name="Nakagawa K."/>
            <person name="Okumura K."/>
            <person name="Nagase T."/>
            <person name="Nomura N."/>
            <person name="Kikuchi H."/>
            <person name="Masuho Y."/>
            <person name="Yamashita R."/>
            <person name="Nakai K."/>
            <person name="Yada T."/>
            <person name="Nakamura Y."/>
            <person name="Ohara O."/>
            <person name="Isogai T."/>
            <person name="Sugano S."/>
        </authorList>
    </citation>
    <scope>NUCLEOTIDE SEQUENCE [LARGE SCALE MRNA]</scope>
    <source>
        <tissue>Mammary gland</tissue>
    </source>
</reference>
<reference key="3">
    <citation type="journal article" date="1988" name="Genomics">
        <title>The hemopexin gene maps to the same location as the beta-globin gene cluster on human chromosome 11.</title>
        <authorList>
            <person name="Law M.L."/>
            <person name="Cai G.Y."/>
            <person name="Hartz J.A."/>
            <person name="Jones C."/>
            <person name="Kao F.T."/>
        </authorList>
    </citation>
    <scope>NUCLEOTIDE SEQUENCE [MRNA] OF 2-462</scope>
</reference>
<reference key="4">
    <citation type="journal article" date="1985" name="Nucleic Acids Res.">
        <title>The primary structure of human hemopexin deduced from cDNA sequence: evidence for internal, repeating homology.</title>
        <authorList>
            <person name="Altruda F."/>
            <person name="Poli V."/>
            <person name="Restagno G."/>
            <person name="Argos P."/>
            <person name="Cortese R."/>
            <person name="Silengo L."/>
        </authorList>
    </citation>
    <scope>NUCLEOTIDE SEQUENCE [MRNA] OF 22-462</scope>
</reference>
<reference key="5">
    <citation type="journal article" date="1985" name="Proc. Natl. Acad. Sci. U.S.A.">
        <title>Complete amino acid sequence of human hemopexin, the heme-binding protein of serum.</title>
        <authorList>
            <person name="Takahashi N."/>
            <person name="Takahashi Y."/>
            <person name="Putnam F.W."/>
        </authorList>
    </citation>
    <scope>PROTEIN SEQUENCE OF ACTIVE PROTEIN</scope>
</reference>
<reference key="6">
    <citation type="journal article" date="1984" name="FEBS Lett.">
        <title>Amino acid sequence of the N-terminal region of human hemopexin.</title>
        <authorList>
            <person name="Frantikova V."/>
            <person name="Borvak J."/>
            <person name="Kluh I."/>
            <person name="Moravek L."/>
        </authorList>
    </citation>
    <scope>PROTEIN SEQUENCE OF 24-255</scope>
</reference>
<reference key="7">
    <citation type="journal article" date="1984" name="Proc. Natl. Acad. Sci. U.S.A.">
        <title>Structure of human hemopexin: O-glycosyl and N-glycosyl sites and unusual clustering of tryptophan residues.</title>
        <authorList>
            <person name="Takahashi N."/>
            <person name="Takahashi Y."/>
            <person name="Putnam F.W."/>
        </authorList>
    </citation>
    <scope>PARTIAL PROTEIN SEQUENCE</scope>
    <scope>GLYCOSYLATION AT THR-24; ASN-64; ASN-64; ASN-187; ASN-240; ASN-246 AND ASN-453</scope>
</reference>
<reference key="8">
    <citation type="journal article" date="2004" name="Mol. Cell. Proteomics">
        <title>A proteomic analysis of human bile.</title>
        <authorList>
            <person name="Kristiansen T.Z."/>
            <person name="Bunkenborg J."/>
            <person name="Gronborg M."/>
            <person name="Molina H."/>
            <person name="Thuluvath P.J."/>
            <person name="Argani P."/>
            <person name="Goggins M.G."/>
            <person name="Maitra A."/>
            <person name="Pandey A."/>
        </authorList>
    </citation>
    <scope>GLYCOSYLATION [LARGE SCALE ANALYSIS] AT ASN-187 AND ASN-453</scope>
    <source>
        <tissue>Bile</tissue>
    </source>
</reference>
<reference key="9">
    <citation type="journal article" date="2004" name="Proteomics">
        <title>Screening for N-glycosylated proteins by liquid chromatography mass spectrometry.</title>
        <authorList>
            <person name="Bunkenborg J."/>
            <person name="Pilch B.J."/>
            <person name="Podtelejnikov A.V."/>
            <person name="Wisniewski J.R."/>
        </authorList>
    </citation>
    <scope>GLYCOSYLATION [LARGE SCALE ANALYSIS] AT ASN-187; ASN-240 AND ASN-246</scope>
    <source>
        <tissue>Plasma</tissue>
    </source>
</reference>
<reference key="10">
    <citation type="journal article" date="2005" name="J. Proteome Res.">
        <title>Human plasma N-glycoproteome analysis by immunoaffinity subtraction, hydrazide chemistry, and mass spectrometry.</title>
        <authorList>
            <person name="Liu T."/>
            <person name="Qian W.-J."/>
            <person name="Gritsenko M.A."/>
            <person name="Camp D.G. II"/>
            <person name="Monroe M.E."/>
            <person name="Moore R.J."/>
            <person name="Smith R.D."/>
        </authorList>
    </citation>
    <scope>GLYCOSYLATION [LARGE SCALE ANALYSIS] AT ASN-64 AND ASN-187</scope>
    <source>
        <tissue>Plasma</tissue>
    </source>
</reference>
<reference key="11">
    <citation type="journal article" date="2006" name="J. Proteome Res.">
        <title>Identification of N-linked glycoproteins in human saliva by glycoprotein capture and mass spectrometry.</title>
        <authorList>
            <person name="Ramachandran P."/>
            <person name="Boontheung P."/>
            <person name="Xie Y."/>
            <person name="Sondej M."/>
            <person name="Wong D.T."/>
            <person name="Loo J.A."/>
        </authorList>
    </citation>
    <scope>GLYCOSYLATION [LARGE SCALE ANALYSIS] AT ASN-187 AND ASN-453</scope>
    <source>
        <tissue>Saliva</tissue>
    </source>
</reference>
<reference key="12">
    <citation type="journal article" date="2008" name="Biochemistry">
        <title>The ORF3 protein of hepatitis E virus interacts with hemopexin by means of its 26 amino acid N-terminal hydrophobic domain II.</title>
        <authorList>
            <person name="Ratra R."/>
            <person name="Kar-Roy A."/>
            <person name="Lal S.K."/>
        </authorList>
    </citation>
    <scope>INTERACTION WITH HEPATITIS E VIRUS/HEV ORF3 PROTEIN (MICROBIAL INFECTION)</scope>
</reference>
<reference key="13">
    <citation type="journal article" date="2009" name="J. Proteome Res.">
        <title>Glycoproteomics analysis of human liver tissue by combination of multiple enzyme digestion and hydrazide chemistry.</title>
        <authorList>
            <person name="Chen R."/>
            <person name="Jiang X."/>
            <person name="Sun D."/>
            <person name="Han G."/>
            <person name="Wang F."/>
            <person name="Ye M."/>
            <person name="Wang L."/>
            <person name="Zou H."/>
        </authorList>
    </citation>
    <scope>GLYCOSYLATION [LARGE SCALE ANALYSIS] AT ASN-187 AND ASN-453</scope>
    <source>
        <tissue>Liver</tissue>
    </source>
</reference>
<reference key="14">
    <citation type="journal article" date="2009" name="Mol. Cell. Proteomics">
        <title>A strategy for precise and large scale identification of core fucosylated glycoproteins.</title>
        <authorList>
            <person name="Jia W."/>
            <person name="Lu Z."/>
            <person name="Fu Y."/>
            <person name="Wang H.P."/>
            <person name="Wang L.H."/>
            <person name="Chi H."/>
            <person name="Yuan Z.F."/>
            <person name="Zheng Z.B."/>
            <person name="Song L.N."/>
            <person name="Han H.H."/>
            <person name="Liang Y.M."/>
            <person name="Wang J.L."/>
            <person name="Cai Y."/>
            <person name="Zhang Y.K."/>
            <person name="Deng Y.L."/>
            <person name="Ying W.T."/>
            <person name="He S.M."/>
            <person name="Qian X.H."/>
        </authorList>
    </citation>
    <scope>GLYCOSYLATION AT ASN-187 AND ASN-453</scope>
</reference>
<reference key="15">
    <citation type="journal article" date="2009" name="Nat. Methods">
        <title>Enrichment of glycopeptides for glycan structure and attachment site identification.</title>
        <authorList>
            <person name="Nilsson J."/>
            <person name="Rueetschi U."/>
            <person name="Halim A."/>
            <person name="Hesse C."/>
            <person name="Carlsohn E."/>
            <person name="Brinkmalm G."/>
            <person name="Larson G."/>
        </authorList>
    </citation>
    <scope>GLYCOSYLATION [LARGE SCALE ANALYSIS] AT THR-24; ASN-64; ASN-187 AND ASN-453</scope>
    <scope>STRUCTURE OF CARBOHYDRATES</scope>
    <source>
        <tissue>Cerebrospinal fluid</tissue>
    </source>
</reference>
<reference key="16">
    <citation type="journal article" date="2010" name="J. Biol. Chem.">
        <title>Kinetics and specificity of feline leukemia virus subgroup C receptor (FLVCR) export function and its dependence on hemopexin.</title>
        <authorList>
            <person name="Yang Z."/>
            <person name="Philips J.D."/>
            <person name="Doty R.T."/>
            <person name="Giraudi P."/>
            <person name="Ostrow J.D."/>
            <person name="Tiribelli C."/>
            <person name="Smith A."/>
            <person name="Abkowitz J.L."/>
        </authorList>
    </citation>
    <scope>INTERACTION WITH FLVCR1</scope>
</reference>
<reference key="17">
    <citation type="journal article" date="2013" name="J. Proteome Res.">
        <title>LC-MS/MS characterization of O-glycosylation sites and glycan structures of human cerebrospinal fluid glycoproteins.</title>
        <authorList>
            <person name="Halim A."/>
            <person name="Ruetschi U."/>
            <person name="Larson G."/>
            <person name="Nilsson J."/>
        </authorList>
    </citation>
    <scope>GLYCOSYLATION AT THR-29</scope>
    <scope>IDENTIFICATION BY MASS SPECTROMETRY</scope>
</reference>
<reference key="18">
    <citation type="journal article" date="2014" name="J. Proteomics">
        <title>An enzyme assisted RP-RPLC approach for in-depth analysis of human liver phosphoproteome.</title>
        <authorList>
            <person name="Bian Y."/>
            <person name="Song C."/>
            <person name="Cheng K."/>
            <person name="Dong M."/>
            <person name="Wang F."/>
            <person name="Huang J."/>
            <person name="Sun D."/>
            <person name="Wang L."/>
            <person name="Ye M."/>
            <person name="Zou H."/>
        </authorList>
    </citation>
    <scope>IDENTIFICATION BY MASS SPECTROMETRY [LARGE SCALE ANALYSIS]</scope>
    <source>
        <tissue>Liver</tissue>
    </source>
</reference>
<comment type="function">
    <text>Binds heme and transports it to the liver for breakdown and iron recovery, after which the free hemopexin returns to the circulation.</text>
</comment>
<comment type="subunit">
    <text evidence="11">Interacts with FLVCR1.</text>
</comment>
<comment type="subunit">
    <text evidence="7">(Microbial infection) Interacts with hepatitis E virus/HEV protein ORF3.</text>
</comment>
<comment type="interaction">
    <interactant intactId="EBI-1223791">
        <id>P02790</id>
    </interactant>
    <interactant intactId="EBI-8995375">
        <id>Q8IXK2</id>
        <label>GALNT12</label>
    </interactant>
    <organismsDiffer>false</organismsDiffer>
    <experiments>3</experiments>
</comment>
<comment type="subcellular location">
    <subcellularLocation>
        <location>Secreted</location>
    </subcellularLocation>
</comment>
<comment type="tissue specificity">
    <text>Expressed by the liver and secreted in plasma.</text>
</comment>
<comment type="PTM">
    <text evidence="3 4 5 6 8 9 10 12 14">N- and O-glycosylated. O-glycosylated with core 1 or possibly core 8 glycans. O-glycosylation in the 30-40 region is minor compared to glycosylation at Thr-24 and Thr-29.</text>
</comment>
<comment type="miscellaneous">
    <text evidence="1">The isolated N-terminal domain binds one heme. The full-length protein also binds one heme, but at a different site. The physiological significance of this is not clear (By similarity).</text>
</comment>
<comment type="similarity">
    <text evidence="16">Belongs to the hemopexin family.</text>
</comment>
<comment type="sequence caution" evidence="16">
    <conflict type="erroneous initiation">
        <sequence resource="EMBL-CDS" id="CAA26382"/>
    </conflict>
</comment>
<dbReference type="EMBL" id="M36803">
    <property type="protein sequence ID" value="AAA58678.1"/>
    <property type="molecule type" value="Genomic_DNA"/>
</dbReference>
<dbReference type="EMBL" id="M36796">
    <property type="protein sequence ID" value="AAA58678.1"/>
    <property type="status" value="JOINED"/>
    <property type="molecule type" value="Genomic_DNA"/>
</dbReference>
<dbReference type="EMBL" id="M36799">
    <property type="protein sequence ID" value="AAA58678.1"/>
    <property type="status" value="JOINED"/>
    <property type="molecule type" value="Genomic_DNA"/>
</dbReference>
<dbReference type="EMBL" id="M36800">
    <property type="protein sequence ID" value="AAA58678.1"/>
    <property type="status" value="JOINED"/>
    <property type="molecule type" value="Genomic_DNA"/>
</dbReference>
<dbReference type="EMBL" id="M36801">
    <property type="protein sequence ID" value="AAA58678.1"/>
    <property type="status" value="JOINED"/>
    <property type="molecule type" value="Genomic_DNA"/>
</dbReference>
<dbReference type="EMBL" id="M36802">
    <property type="protein sequence ID" value="AAA58678.1"/>
    <property type="status" value="JOINED"/>
    <property type="molecule type" value="Genomic_DNA"/>
</dbReference>
<dbReference type="EMBL" id="AK313648">
    <property type="protein sequence ID" value="BAG36404.1"/>
    <property type="molecule type" value="mRNA"/>
</dbReference>
<dbReference type="EMBL" id="J03048">
    <property type="protein sequence ID" value="AAA52704.1"/>
    <property type="molecule type" value="mRNA"/>
</dbReference>
<dbReference type="EMBL" id="X02537">
    <property type="protein sequence ID" value="CAA26382.1"/>
    <property type="status" value="ALT_INIT"/>
    <property type="molecule type" value="mRNA"/>
</dbReference>
<dbReference type="CCDS" id="CCDS7763.1"/>
<dbReference type="PIR" id="I56456">
    <property type="entry name" value="OQHU"/>
</dbReference>
<dbReference type="RefSeq" id="NP_000604.1">
    <property type="nucleotide sequence ID" value="NM_000613.3"/>
</dbReference>
<dbReference type="SASBDB" id="P02790"/>
<dbReference type="SMR" id="P02790"/>
<dbReference type="BioGRID" id="109500">
    <property type="interactions" value="78"/>
</dbReference>
<dbReference type="DIP" id="DIP-38339N"/>
<dbReference type="FunCoup" id="P02790">
    <property type="interactions" value="505"/>
</dbReference>
<dbReference type="IntAct" id="P02790">
    <property type="interactions" value="46"/>
</dbReference>
<dbReference type="MINT" id="P02790"/>
<dbReference type="STRING" id="9606.ENSP00000265983"/>
<dbReference type="DrugBank" id="DB00080">
    <property type="generic name" value="Daptomycin"/>
</dbReference>
<dbReference type="DrugBank" id="DB14533">
    <property type="generic name" value="Zinc chloride"/>
</dbReference>
<dbReference type="DrugBank" id="DB14548">
    <property type="generic name" value="Zinc sulfate, unspecified form"/>
</dbReference>
<dbReference type="CarbonylDB" id="P02790"/>
<dbReference type="GlyConnect" id="757">
    <property type="glycosylation" value="84 N-Linked glycans (5 sites), 3 O-Linked glycans (2 sites)"/>
</dbReference>
<dbReference type="GlyCosmos" id="P02790">
    <property type="glycosylation" value="10 sites, 109 glycans"/>
</dbReference>
<dbReference type="GlyGen" id="P02790">
    <property type="glycosylation" value="12 sites, 226 N-linked glycans (5 sites), 9 O-linked glycans (6 sites)"/>
</dbReference>
<dbReference type="iPTMnet" id="P02790"/>
<dbReference type="PhosphoSitePlus" id="P02790"/>
<dbReference type="BioMuta" id="HPX"/>
<dbReference type="DMDM" id="1708182"/>
<dbReference type="REPRODUCTION-2DPAGE" id="IPI00022488"/>
<dbReference type="CPTAC" id="non-CPTAC-1131"/>
<dbReference type="jPOST" id="P02790"/>
<dbReference type="MassIVE" id="P02790"/>
<dbReference type="PaxDb" id="9606-ENSP00000265983"/>
<dbReference type="PeptideAtlas" id="P02790"/>
<dbReference type="PRIDE" id="P02790"/>
<dbReference type="ProteomicsDB" id="51598"/>
<dbReference type="Pumba" id="P02790"/>
<dbReference type="Antibodypedia" id="23841">
    <property type="antibodies" value="566 antibodies from 40 providers"/>
</dbReference>
<dbReference type="DNASU" id="3263"/>
<dbReference type="Ensembl" id="ENST00000265983.8">
    <property type="protein sequence ID" value="ENSP00000265983.3"/>
    <property type="gene ID" value="ENSG00000110169.12"/>
</dbReference>
<dbReference type="GeneID" id="3263"/>
<dbReference type="KEGG" id="hsa:3263"/>
<dbReference type="MANE-Select" id="ENST00000265983.8">
    <property type="protein sequence ID" value="ENSP00000265983.3"/>
    <property type="RefSeq nucleotide sequence ID" value="NM_000613.3"/>
    <property type="RefSeq protein sequence ID" value="NP_000604.1"/>
</dbReference>
<dbReference type="UCSC" id="uc001mdg.3">
    <property type="organism name" value="human"/>
</dbReference>
<dbReference type="AGR" id="HGNC:5171"/>
<dbReference type="CTD" id="3263"/>
<dbReference type="DisGeNET" id="3263"/>
<dbReference type="GeneCards" id="HPX"/>
<dbReference type="HGNC" id="HGNC:5171">
    <property type="gene designation" value="HPX"/>
</dbReference>
<dbReference type="HPA" id="ENSG00000110169">
    <property type="expression patterns" value="Tissue enriched (liver)"/>
</dbReference>
<dbReference type="MIM" id="142290">
    <property type="type" value="gene"/>
</dbReference>
<dbReference type="neXtProt" id="NX_P02790"/>
<dbReference type="OpenTargets" id="ENSG00000110169"/>
<dbReference type="PharmGKB" id="PA29441"/>
<dbReference type="VEuPathDB" id="HostDB:ENSG00000110169"/>
<dbReference type="eggNOG" id="KOG1565">
    <property type="taxonomic scope" value="Eukaryota"/>
</dbReference>
<dbReference type="GeneTree" id="ENSGT00390000009178"/>
<dbReference type="HOGENOM" id="CLU_061713_0_0_1"/>
<dbReference type="InParanoid" id="P02790"/>
<dbReference type="OMA" id="CSSAMRW"/>
<dbReference type="OrthoDB" id="8953614at2759"/>
<dbReference type="PAN-GO" id="P02790">
    <property type="GO annotations" value="2 GO annotations based on evolutionary models"/>
</dbReference>
<dbReference type="PhylomeDB" id="P02790"/>
<dbReference type="TreeFam" id="TF331201"/>
<dbReference type="PathwayCommons" id="P02790"/>
<dbReference type="Reactome" id="R-HSA-2168880">
    <property type="pathway name" value="Scavenging of heme from plasma"/>
</dbReference>
<dbReference type="SignaLink" id="P02790"/>
<dbReference type="SIGNOR" id="P02790"/>
<dbReference type="BioGRID-ORCS" id="3263">
    <property type="hits" value="9 hits in 1149 CRISPR screens"/>
</dbReference>
<dbReference type="ChiTaRS" id="HPX">
    <property type="organism name" value="human"/>
</dbReference>
<dbReference type="GeneWiki" id="Hemopexin"/>
<dbReference type="GenomeRNAi" id="3263"/>
<dbReference type="Pharos" id="P02790">
    <property type="development level" value="Tbio"/>
</dbReference>
<dbReference type="PRO" id="PR:P02790"/>
<dbReference type="Proteomes" id="UP000005640">
    <property type="component" value="Chromosome 11"/>
</dbReference>
<dbReference type="RNAct" id="P02790">
    <property type="molecule type" value="protein"/>
</dbReference>
<dbReference type="Bgee" id="ENSG00000110169">
    <property type="expression patterns" value="Expressed in right lobe of liver and 106 other cell types or tissues"/>
</dbReference>
<dbReference type="ExpressionAtlas" id="P02790">
    <property type="expression patterns" value="baseline and differential"/>
</dbReference>
<dbReference type="GO" id="GO:0072562">
    <property type="term" value="C:blood microparticle"/>
    <property type="evidence" value="ECO:0007005"/>
    <property type="project" value="UniProtKB"/>
</dbReference>
<dbReference type="GO" id="GO:0062023">
    <property type="term" value="C:collagen-containing extracellular matrix"/>
    <property type="evidence" value="ECO:0007005"/>
    <property type="project" value="BHF-UCL"/>
</dbReference>
<dbReference type="GO" id="GO:0071682">
    <property type="term" value="C:endocytic vesicle lumen"/>
    <property type="evidence" value="ECO:0000304"/>
    <property type="project" value="Reactome"/>
</dbReference>
<dbReference type="GO" id="GO:0070062">
    <property type="term" value="C:extracellular exosome"/>
    <property type="evidence" value="ECO:0007005"/>
    <property type="project" value="UniProtKB"/>
</dbReference>
<dbReference type="GO" id="GO:0005576">
    <property type="term" value="C:extracellular region"/>
    <property type="evidence" value="ECO:0000304"/>
    <property type="project" value="Reactome"/>
</dbReference>
<dbReference type="GO" id="GO:0005615">
    <property type="term" value="C:extracellular space"/>
    <property type="evidence" value="ECO:0000314"/>
    <property type="project" value="MGI"/>
</dbReference>
<dbReference type="GO" id="GO:0015232">
    <property type="term" value="F:heme transmembrane transporter activity"/>
    <property type="evidence" value="ECO:0000304"/>
    <property type="project" value="ProtInc"/>
</dbReference>
<dbReference type="GO" id="GO:0046872">
    <property type="term" value="F:metal ion binding"/>
    <property type="evidence" value="ECO:0007669"/>
    <property type="project" value="UniProtKB-KW"/>
</dbReference>
<dbReference type="GO" id="GO:0042168">
    <property type="term" value="P:heme metabolic process"/>
    <property type="evidence" value="ECO:0000318"/>
    <property type="project" value="GO_Central"/>
</dbReference>
<dbReference type="GO" id="GO:0015886">
    <property type="term" value="P:heme transport"/>
    <property type="evidence" value="ECO:0000304"/>
    <property type="project" value="ProtInc"/>
</dbReference>
<dbReference type="GO" id="GO:0020027">
    <property type="term" value="P:hemoglobin metabolic process"/>
    <property type="evidence" value="ECO:0007669"/>
    <property type="project" value="Ensembl"/>
</dbReference>
<dbReference type="GO" id="GO:0006879">
    <property type="term" value="P:intracellular iron ion homeostasis"/>
    <property type="evidence" value="ECO:0000304"/>
    <property type="project" value="ProtInc"/>
</dbReference>
<dbReference type="GO" id="GO:0002925">
    <property type="term" value="P:positive regulation of humoral immune response mediated by circulating immunoglobulin"/>
    <property type="evidence" value="ECO:0007669"/>
    <property type="project" value="Ensembl"/>
</dbReference>
<dbReference type="GO" id="GO:0002639">
    <property type="term" value="P:positive regulation of immunoglobulin production"/>
    <property type="evidence" value="ECO:0007669"/>
    <property type="project" value="Ensembl"/>
</dbReference>
<dbReference type="GO" id="GO:0060335">
    <property type="term" value="P:positive regulation of type II interferon-mediated signaling pathway"/>
    <property type="evidence" value="ECO:0007669"/>
    <property type="project" value="Ensembl"/>
</dbReference>
<dbReference type="GO" id="GO:0051246">
    <property type="term" value="P:regulation of protein metabolic process"/>
    <property type="evidence" value="ECO:0007669"/>
    <property type="project" value="Ensembl"/>
</dbReference>
<dbReference type="GO" id="GO:0060333">
    <property type="term" value="P:type II interferon-mediated signaling pathway"/>
    <property type="evidence" value="ECO:0007669"/>
    <property type="project" value="Ensembl"/>
</dbReference>
<dbReference type="CDD" id="cd00094">
    <property type="entry name" value="HX"/>
    <property type="match status" value="2"/>
</dbReference>
<dbReference type="FunFam" id="2.110.10.10:FF:000009">
    <property type="entry name" value="Hemopexin"/>
    <property type="match status" value="1"/>
</dbReference>
<dbReference type="FunFam" id="2.110.10.10:FF:000013">
    <property type="entry name" value="Hemopexin"/>
    <property type="match status" value="1"/>
</dbReference>
<dbReference type="Gene3D" id="2.110.10.10">
    <property type="entry name" value="Hemopexin-like domain"/>
    <property type="match status" value="2"/>
</dbReference>
<dbReference type="InterPro" id="IPR051298">
    <property type="entry name" value="Heme_transport/Cell_adhesion"/>
</dbReference>
<dbReference type="InterPro" id="IPR016358">
    <property type="entry name" value="Hemopexin"/>
</dbReference>
<dbReference type="InterPro" id="IPR000585">
    <property type="entry name" value="Hemopexin-like_dom"/>
</dbReference>
<dbReference type="InterPro" id="IPR036375">
    <property type="entry name" value="Hemopexin-like_dom_sf"/>
</dbReference>
<dbReference type="InterPro" id="IPR018487">
    <property type="entry name" value="Hemopexin-like_repeat"/>
</dbReference>
<dbReference type="InterPro" id="IPR018486">
    <property type="entry name" value="Hemopexin_CS"/>
</dbReference>
<dbReference type="PANTHER" id="PTHR22917:SF9">
    <property type="entry name" value="HEMOPEXIN"/>
    <property type="match status" value="1"/>
</dbReference>
<dbReference type="PANTHER" id="PTHR22917">
    <property type="entry name" value="HEMOPEXIN DOMAIN-CONTAINING PROTEIN"/>
    <property type="match status" value="1"/>
</dbReference>
<dbReference type="Pfam" id="PF00045">
    <property type="entry name" value="Hemopexin"/>
    <property type="match status" value="5"/>
</dbReference>
<dbReference type="PIRSF" id="PIRSF002551">
    <property type="entry name" value="Hemopexin_chordata"/>
    <property type="match status" value="1"/>
</dbReference>
<dbReference type="SMART" id="SM00120">
    <property type="entry name" value="HX"/>
    <property type="match status" value="5"/>
</dbReference>
<dbReference type="SUPFAM" id="SSF50923">
    <property type="entry name" value="Hemopexin-like domain"/>
    <property type="match status" value="2"/>
</dbReference>
<dbReference type="PROSITE" id="PS00024">
    <property type="entry name" value="HEMOPEXIN"/>
    <property type="match status" value="2"/>
</dbReference>
<dbReference type="PROSITE" id="PS51642">
    <property type="entry name" value="HEMOPEXIN_2"/>
    <property type="match status" value="8"/>
</dbReference>